<name>NIKR_ECO24</name>
<sequence>MQRVTITLDDDLLETLDSLSQRRGYNNRSEAIRDILRSALAQEATQQHGTQGFAVLSYVYEHEKRDLASRIVSTQHHHHDLSVATLHVHINHDDCLEIAVLKGDMGDVQHFADDVIAQRGVRHGHLQCLPKED</sequence>
<evidence type="ECO:0000255" key="1">
    <source>
        <dbReference type="HAMAP-Rule" id="MF_00476"/>
    </source>
</evidence>
<keyword id="KW-0238">DNA-binding</keyword>
<keyword id="KW-0479">Metal-binding</keyword>
<keyword id="KW-0533">Nickel</keyword>
<keyword id="KW-1185">Reference proteome</keyword>
<keyword id="KW-0678">Repressor</keyword>
<keyword id="KW-0804">Transcription</keyword>
<keyword id="KW-0805">Transcription regulation</keyword>
<comment type="function">
    <text evidence="1">Transcriptional repressor of the nikABCDE operon. Is active in the presence of excessive concentrations of intracellular nickel.</text>
</comment>
<comment type="cofactor">
    <cofactor evidence="1">
        <name>Ni(2+)</name>
        <dbReference type="ChEBI" id="CHEBI:49786"/>
    </cofactor>
    <text evidence="1">Binds 1 nickel ion per subunit.</text>
</comment>
<comment type="subunit">
    <text evidence="1">Homotetramer.</text>
</comment>
<comment type="similarity">
    <text evidence="1">Belongs to the transcriptional regulatory CopG/NikR family.</text>
</comment>
<proteinExistence type="inferred from homology"/>
<organism>
    <name type="scientific">Escherichia coli O139:H28 (strain E24377A / ETEC)</name>
    <dbReference type="NCBI Taxonomy" id="331111"/>
    <lineage>
        <taxon>Bacteria</taxon>
        <taxon>Pseudomonadati</taxon>
        <taxon>Pseudomonadota</taxon>
        <taxon>Gammaproteobacteria</taxon>
        <taxon>Enterobacterales</taxon>
        <taxon>Enterobacteriaceae</taxon>
        <taxon>Escherichia</taxon>
    </lineage>
</organism>
<gene>
    <name evidence="1" type="primary">nikR</name>
    <name type="ordered locus">EcE24377A_3965</name>
</gene>
<feature type="chain" id="PRO_1000060404" description="Nickel-responsive regulator">
    <location>
        <begin position="1"/>
        <end position="133"/>
    </location>
</feature>
<feature type="binding site" evidence="1">
    <location>
        <position position="76"/>
    </location>
    <ligand>
        <name>Ni(2+)</name>
        <dbReference type="ChEBI" id="CHEBI:49786"/>
    </ligand>
</feature>
<feature type="binding site" evidence="1">
    <location>
        <position position="87"/>
    </location>
    <ligand>
        <name>Ni(2+)</name>
        <dbReference type="ChEBI" id="CHEBI:49786"/>
    </ligand>
</feature>
<feature type="binding site" evidence="1">
    <location>
        <position position="89"/>
    </location>
    <ligand>
        <name>Ni(2+)</name>
        <dbReference type="ChEBI" id="CHEBI:49786"/>
    </ligand>
</feature>
<feature type="binding site" evidence="1">
    <location>
        <position position="95"/>
    </location>
    <ligand>
        <name>Ni(2+)</name>
        <dbReference type="ChEBI" id="CHEBI:49786"/>
    </ligand>
</feature>
<protein>
    <recommendedName>
        <fullName evidence="1">Nickel-responsive regulator</fullName>
    </recommendedName>
</protein>
<accession>A7ZT19</accession>
<dbReference type="EMBL" id="CP000800">
    <property type="protein sequence ID" value="ABV19927.1"/>
    <property type="molecule type" value="Genomic_DNA"/>
</dbReference>
<dbReference type="RefSeq" id="WP_001190062.1">
    <property type="nucleotide sequence ID" value="NC_009801.1"/>
</dbReference>
<dbReference type="SMR" id="A7ZT19"/>
<dbReference type="GeneID" id="93778510"/>
<dbReference type="KEGG" id="ecw:EcE24377A_3965"/>
<dbReference type="HOGENOM" id="CLU_113319_1_4_6"/>
<dbReference type="Proteomes" id="UP000001122">
    <property type="component" value="Chromosome"/>
</dbReference>
<dbReference type="GO" id="GO:0003700">
    <property type="term" value="F:DNA-binding transcription factor activity"/>
    <property type="evidence" value="ECO:0007669"/>
    <property type="project" value="UniProtKB-UniRule"/>
</dbReference>
<dbReference type="GO" id="GO:0016151">
    <property type="term" value="F:nickel cation binding"/>
    <property type="evidence" value="ECO:0007669"/>
    <property type="project" value="UniProtKB-UniRule"/>
</dbReference>
<dbReference type="GO" id="GO:0043565">
    <property type="term" value="F:sequence-specific DNA binding"/>
    <property type="evidence" value="ECO:0007669"/>
    <property type="project" value="UniProtKB-ARBA"/>
</dbReference>
<dbReference type="GO" id="GO:0010045">
    <property type="term" value="P:response to nickel cation"/>
    <property type="evidence" value="ECO:0007669"/>
    <property type="project" value="InterPro"/>
</dbReference>
<dbReference type="CDD" id="cd22231">
    <property type="entry name" value="RHH_NikR_HicB-like"/>
    <property type="match status" value="1"/>
</dbReference>
<dbReference type="FunFam" id="1.10.1220.10:FF:000001">
    <property type="entry name" value="Nickel-responsive regulator"/>
    <property type="match status" value="1"/>
</dbReference>
<dbReference type="FunFam" id="3.30.70.1150:FF:000002">
    <property type="entry name" value="Nickel-responsive regulator"/>
    <property type="match status" value="1"/>
</dbReference>
<dbReference type="Gene3D" id="3.30.70.1150">
    <property type="entry name" value="ACT-like. Chain A, domain 2"/>
    <property type="match status" value="1"/>
</dbReference>
<dbReference type="Gene3D" id="1.10.1220.10">
    <property type="entry name" value="Met repressor-like"/>
    <property type="match status" value="1"/>
</dbReference>
<dbReference type="HAMAP" id="MF_00476">
    <property type="entry name" value="NikR"/>
    <property type="match status" value="1"/>
</dbReference>
<dbReference type="InterPro" id="IPR027271">
    <property type="entry name" value="Acetolactate_synth/TF_NikR_C"/>
</dbReference>
<dbReference type="InterPro" id="IPR045865">
    <property type="entry name" value="ACT-like_dom_sf"/>
</dbReference>
<dbReference type="InterPro" id="IPR013321">
    <property type="entry name" value="Arc_rbn_hlx_hlx"/>
</dbReference>
<dbReference type="InterPro" id="IPR002145">
    <property type="entry name" value="CopG"/>
</dbReference>
<dbReference type="InterPro" id="IPR050192">
    <property type="entry name" value="CopG/NikR_regulator"/>
</dbReference>
<dbReference type="InterPro" id="IPR022988">
    <property type="entry name" value="Ni_resp_reg_NikR"/>
</dbReference>
<dbReference type="InterPro" id="IPR014160">
    <property type="entry name" value="Nickel_NikR_proteobac"/>
</dbReference>
<dbReference type="InterPro" id="IPR010985">
    <property type="entry name" value="Ribbon_hlx_hlx"/>
</dbReference>
<dbReference type="InterPro" id="IPR014864">
    <property type="entry name" value="TF_NikR_Ni-bd_C"/>
</dbReference>
<dbReference type="NCBIfam" id="TIGR02793">
    <property type="entry name" value="nikR"/>
    <property type="match status" value="1"/>
</dbReference>
<dbReference type="NCBIfam" id="NF002815">
    <property type="entry name" value="PRK02967.1"/>
    <property type="match status" value="1"/>
</dbReference>
<dbReference type="NCBIfam" id="NF003381">
    <property type="entry name" value="PRK04460.1"/>
    <property type="match status" value="1"/>
</dbReference>
<dbReference type="PANTHER" id="PTHR34719">
    <property type="entry name" value="NICKEL-RESPONSIVE REGULATOR"/>
    <property type="match status" value="1"/>
</dbReference>
<dbReference type="PANTHER" id="PTHR34719:SF2">
    <property type="entry name" value="NICKEL-RESPONSIVE REGULATOR"/>
    <property type="match status" value="1"/>
</dbReference>
<dbReference type="Pfam" id="PF08753">
    <property type="entry name" value="NikR_C"/>
    <property type="match status" value="1"/>
</dbReference>
<dbReference type="Pfam" id="PF01402">
    <property type="entry name" value="RHH_1"/>
    <property type="match status" value="1"/>
</dbReference>
<dbReference type="SUPFAM" id="SSF55021">
    <property type="entry name" value="ACT-like"/>
    <property type="match status" value="1"/>
</dbReference>
<dbReference type="SUPFAM" id="SSF47598">
    <property type="entry name" value="Ribbon-helix-helix"/>
    <property type="match status" value="1"/>
</dbReference>
<reference key="1">
    <citation type="journal article" date="2008" name="J. Bacteriol.">
        <title>The pangenome structure of Escherichia coli: comparative genomic analysis of E. coli commensal and pathogenic isolates.</title>
        <authorList>
            <person name="Rasko D.A."/>
            <person name="Rosovitz M.J."/>
            <person name="Myers G.S.A."/>
            <person name="Mongodin E.F."/>
            <person name="Fricke W.F."/>
            <person name="Gajer P."/>
            <person name="Crabtree J."/>
            <person name="Sebaihia M."/>
            <person name="Thomson N.R."/>
            <person name="Chaudhuri R."/>
            <person name="Henderson I.R."/>
            <person name="Sperandio V."/>
            <person name="Ravel J."/>
        </authorList>
    </citation>
    <scope>NUCLEOTIDE SEQUENCE [LARGE SCALE GENOMIC DNA]</scope>
    <source>
        <strain>E24377A / ETEC</strain>
    </source>
</reference>